<accession>Q03K46</accession>
<feature type="chain" id="PRO_1000017912" description="Uridine kinase">
    <location>
        <begin position="1"/>
        <end position="211"/>
    </location>
</feature>
<feature type="binding site" evidence="1">
    <location>
        <begin position="12"/>
        <end position="19"/>
    </location>
    <ligand>
        <name>ATP</name>
        <dbReference type="ChEBI" id="CHEBI:30616"/>
    </ligand>
</feature>
<reference key="1">
    <citation type="journal article" date="2006" name="Proc. Natl. Acad. Sci. U.S.A.">
        <title>Comparative genomics of the lactic acid bacteria.</title>
        <authorList>
            <person name="Makarova K.S."/>
            <person name="Slesarev A."/>
            <person name="Wolf Y.I."/>
            <person name="Sorokin A."/>
            <person name="Mirkin B."/>
            <person name="Koonin E.V."/>
            <person name="Pavlov A."/>
            <person name="Pavlova N."/>
            <person name="Karamychev V."/>
            <person name="Polouchine N."/>
            <person name="Shakhova V."/>
            <person name="Grigoriev I."/>
            <person name="Lou Y."/>
            <person name="Rohksar D."/>
            <person name="Lucas S."/>
            <person name="Huang K."/>
            <person name="Goodstein D.M."/>
            <person name="Hawkins T."/>
            <person name="Plengvidhya V."/>
            <person name="Welker D."/>
            <person name="Hughes J."/>
            <person name="Goh Y."/>
            <person name="Benson A."/>
            <person name="Baldwin K."/>
            <person name="Lee J.-H."/>
            <person name="Diaz-Muniz I."/>
            <person name="Dosti B."/>
            <person name="Smeianov V."/>
            <person name="Wechter W."/>
            <person name="Barabote R."/>
            <person name="Lorca G."/>
            <person name="Altermann E."/>
            <person name="Barrangou R."/>
            <person name="Ganesan B."/>
            <person name="Xie Y."/>
            <person name="Rawsthorne H."/>
            <person name="Tamir D."/>
            <person name="Parker C."/>
            <person name="Breidt F."/>
            <person name="Broadbent J.R."/>
            <person name="Hutkins R."/>
            <person name="O'Sullivan D."/>
            <person name="Steele J."/>
            <person name="Unlu G."/>
            <person name="Saier M.H. Jr."/>
            <person name="Klaenhammer T."/>
            <person name="Richardson P."/>
            <person name="Kozyavkin S."/>
            <person name="Weimer B.C."/>
            <person name="Mills D.A."/>
        </authorList>
    </citation>
    <scope>NUCLEOTIDE SEQUENCE [LARGE SCALE GENOMIC DNA]</scope>
    <source>
        <strain>ATCC BAA-491 / LMD-9</strain>
    </source>
</reference>
<name>URK_STRTD</name>
<sequence length="211" mass="24246">MPKKPIIIGVTGGSGGGKTSVSRAILSNFPDEKIAMIEHDSYYKDQSHLTFEERVSTNYDHPFAFDTDLMIEHINELIAGRPVDIPIYDYTQHTRSNKTYRQEPQDVFIVEGILVLEDKRLRDLMDIKLFVDTDDDIRIIRRIKRDMEERGRSLDSIIDQYNSVVKPMYHQFIEPTKRYADVVIPEGVSNTVAIDLINTKVASILEESKKA</sequence>
<comment type="catalytic activity">
    <reaction evidence="1">
        <text>uridine + ATP = UMP + ADP + H(+)</text>
        <dbReference type="Rhea" id="RHEA:16825"/>
        <dbReference type="ChEBI" id="CHEBI:15378"/>
        <dbReference type="ChEBI" id="CHEBI:16704"/>
        <dbReference type="ChEBI" id="CHEBI:30616"/>
        <dbReference type="ChEBI" id="CHEBI:57865"/>
        <dbReference type="ChEBI" id="CHEBI:456216"/>
        <dbReference type="EC" id="2.7.1.48"/>
    </reaction>
</comment>
<comment type="catalytic activity">
    <reaction evidence="1">
        <text>cytidine + ATP = CMP + ADP + H(+)</text>
        <dbReference type="Rhea" id="RHEA:24674"/>
        <dbReference type="ChEBI" id="CHEBI:15378"/>
        <dbReference type="ChEBI" id="CHEBI:17562"/>
        <dbReference type="ChEBI" id="CHEBI:30616"/>
        <dbReference type="ChEBI" id="CHEBI:60377"/>
        <dbReference type="ChEBI" id="CHEBI:456216"/>
        <dbReference type="EC" id="2.7.1.48"/>
    </reaction>
</comment>
<comment type="pathway">
    <text evidence="1">Pyrimidine metabolism; CTP biosynthesis via salvage pathway; CTP from cytidine: step 1/3.</text>
</comment>
<comment type="pathway">
    <text evidence="1">Pyrimidine metabolism; UMP biosynthesis via salvage pathway; UMP from uridine: step 1/1.</text>
</comment>
<comment type="subcellular location">
    <subcellularLocation>
        <location evidence="1">Cytoplasm</location>
    </subcellularLocation>
</comment>
<comment type="similarity">
    <text evidence="1">Belongs to the uridine kinase family.</text>
</comment>
<organism>
    <name type="scientific">Streptococcus thermophilus (strain ATCC BAA-491 / LMD-9)</name>
    <dbReference type="NCBI Taxonomy" id="322159"/>
    <lineage>
        <taxon>Bacteria</taxon>
        <taxon>Bacillati</taxon>
        <taxon>Bacillota</taxon>
        <taxon>Bacilli</taxon>
        <taxon>Lactobacillales</taxon>
        <taxon>Streptococcaceae</taxon>
        <taxon>Streptococcus</taxon>
    </lineage>
</organism>
<evidence type="ECO:0000255" key="1">
    <source>
        <dbReference type="HAMAP-Rule" id="MF_00551"/>
    </source>
</evidence>
<proteinExistence type="inferred from homology"/>
<gene>
    <name evidence="1" type="primary">udk</name>
    <name type="ordered locus">STER_1238</name>
</gene>
<dbReference type="EC" id="2.7.1.48" evidence="1"/>
<dbReference type="EMBL" id="CP000419">
    <property type="protein sequence ID" value="ABJ66426.1"/>
    <property type="molecule type" value="Genomic_DNA"/>
</dbReference>
<dbReference type="RefSeq" id="WP_002946476.1">
    <property type="nucleotide sequence ID" value="NC_008532.1"/>
</dbReference>
<dbReference type="SMR" id="Q03K46"/>
<dbReference type="GeneID" id="66899049"/>
<dbReference type="KEGG" id="ste:STER_1238"/>
<dbReference type="HOGENOM" id="CLU_021278_1_2_9"/>
<dbReference type="UniPathway" id="UPA00574">
    <property type="reaction ID" value="UER00637"/>
</dbReference>
<dbReference type="UniPathway" id="UPA00579">
    <property type="reaction ID" value="UER00640"/>
</dbReference>
<dbReference type="GO" id="GO:0005737">
    <property type="term" value="C:cytoplasm"/>
    <property type="evidence" value="ECO:0007669"/>
    <property type="project" value="UniProtKB-SubCell"/>
</dbReference>
<dbReference type="GO" id="GO:0005524">
    <property type="term" value="F:ATP binding"/>
    <property type="evidence" value="ECO:0007669"/>
    <property type="project" value="UniProtKB-UniRule"/>
</dbReference>
<dbReference type="GO" id="GO:0043771">
    <property type="term" value="F:cytidine kinase activity"/>
    <property type="evidence" value="ECO:0007669"/>
    <property type="project" value="RHEA"/>
</dbReference>
<dbReference type="GO" id="GO:0004849">
    <property type="term" value="F:uridine kinase activity"/>
    <property type="evidence" value="ECO:0007669"/>
    <property type="project" value="UniProtKB-UniRule"/>
</dbReference>
<dbReference type="GO" id="GO:0044211">
    <property type="term" value="P:CTP salvage"/>
    <property type="evidence" value="ECO:0007669"/>
    <property type="project" value="UniProtKB-UniRule"/>
</dbReference>
<dbReference type="GO" id="GO:0044206">
    <property type="term" value="P:UMP salvage"/>
    <property type="evidence" value="ECO:0007669"/>
    <property type="project" value="UniProtKB-UniRule"/>
</dbReference>
<dbReference type="CDD" id="cd02023">
    <property type="entry name" value="UMPK"/>
    <property type="match status" value="1"/>
</dbReference>
<dbReference type="Gene3D" id="3.40.50.300">
    <property type="entry name" value="P-loop containing nucleotide triphosphate hydrolases"/>
    <property type="match status" value="1"/>
</dbReference>
<dbReference type="HAMAP" id="MF_00551">
    <property type="entry name" value="Uridine_kinase"/>
    <property type="match status" value="1"/>
</dbReference>
<dbReference type="InterPro" id="IPR027417">
    <property type="entry name" value="P-loop_NTPase"/>
</dbReference>
<dbReference type="InterPro" id="IPR006083">
    <property type="entry name" value="PRK/URK"/>
</dbReference>
<dbReference type="InterPro" id="IPR026008">
    <property type="entry name" value="Uridine_kinase"/>
</dbReference>
<dbReference type="InterPro" id="IPR000764">
    <property type="entry name" value="Uridine_kinase-like"/>
</dbReference>
<dbReference type="NCBIfam" id="NF004018">
    <property type="entry name" value="PRK05480.1"/>
    <property type="match status" value="1"/>
</dbReference>
<dbReference type="NCBIfam" id="TIGR00235">
    <property type="entry name" value="udk"/>
    <property type="match status" value="1"/>
</dbReference>
<dbReference type="PANTHER" id="PTHR10285">
    <property type="entry name" value="URIDINE KINASE"/>
    <property type="match status" value="1"/>
</dbReference>
<dbReference type="Pfam" id="PF00485">
    <property type="entry name" value="PRK"/>
    <property type="match status" value="1"/>
</dbReference>
<dbReference type="PRINTS" id="PR00988">
    <property type="entry name" value="URIDINKINASE"/>
</dbReference>
<dbReference type="SUPFAM" id="SSF52540">
    <property type="entry name" value="P-loop containing nucleoside triphosphate hydrolases"/>
    <property type="match status" value="1"/>
</dbReference>
<keyword id="KW-0067">ATP-binding</keyword>
<keyword id="KW-0963">Cytoplasm</keyword>
<keyword id="KW-0418">Kinase</keyword>
<keyword id="KW-0547">Nucleotide-binding</keyword>
<keyword id="KW-0808">Transferase</keyword>
<protein>
    <recommendedName>
        <fullName evidence="1">Uridine kinase</fullName>
        <ecNumber evidence="1">2.7.1.48</ecNumber>
    </recommendedName>
    <alternativeName>
        <fullName evidence="1">Cytidine monophosphokinase</fullName>
    </alternativeName>
    <alternativeName>
        <fullName evidence="1">Uridine monophosphokinase</fullName>
    </alternativeName>
</protein>